<sequence>MWSLTVILLISYFLGSIPGALWSSKALHGVDIRNHGSHNCGATNAFRVVGWQAGALATVVDFGKGFLAAGVVASVIRIDPIPSGLSLFGGDPFVVLGLLAGVGAVIGHMYPIFARFEGGKGVNTAAGMLFALTPLTMAITLAVFVAVLLSSRYVSLSSITAAVAFPTIVALRRFGFGADLDPSLLVFGGLLALSIVVAHRSNIQRLLNGTESQISSFEPAQGMLGRGEL</sequence>
<proteinExistence type="inferred from homology"/>
<feature type="chain" id="PRO_0000250329" description="Glycerol-3-phosphate acyltransferase">
    <location>
        <begin position="1"/>
        <end position="229"/>
    </location>
</feature>
<feature type="transmembrane region" description="Helical" evidence="1">
    <location>
        <begin position="2"/>
        <end position="22"/>
    </location>
</feature>
<feature type="transmembrane region" description="Helical" evidence="1">
    <location>
        <begin position="56"/>
        <end position="76"/>
    </location>
</feature>
<feature type="transmembrane region" description="Helical" evidence="1">
    <location>
        <begin position="93"/>
        <end position="113"/>
    </location>
</feature>
<feature type="transmembrane region" description="Helical" evidence="1">
    <location>
        <begin position="129"/>
        <end position="149"/>
    </location>
</feature>
<feature type="transmembrane region" description="Helical" evidence="1">
    <location>
        <begin position="151"/>
        <end position="171"/>
    </location>
</feature>
<feature type="transmembrane region" description="Helical" evidence="1">
    <location>
        <begin position="178"/>
        <end position="198"/>
    </location>
</feature>
<reference key="1">
    <citation type="journal article" date="2005" name="Proc. Natl. Acad. Sci. U.S.A.">
        <title>The genome of Salinibacter ruber: convergence and gene exchange among hyperhalophilic bacteria and archaea.</title>
        <authorList>
            <person name="Mongodin E.F."/>
            <person name="Nelson K.E."/>
            <person name="Daugherty S."/>
            <person name="DeBoy R.T."/>
            <person name="Wister J."/>
            <person name="Khouri H."/>
            <person name="Weidman J."/>
            <person name="Walsh D.A."/>
            <person name="Papke R.T."/>
            <person name="Sanchez Perez G."/>
            <person name="Sharma A.K."/>
            <person name="Nesbo C.L."/>
            <person name="MacLeod D."/>
            <person name="Bapteste E."/>
            <person name="Doolittle W.F."/>
            <person name="Charlebois R.L."/>
            <person name="Legault B."/>
            <person name="Rodriguez-Valera F."/>
        </authorList>
    </citation>
    <scope>NUCLEOTIDE SEQUENCE [LARGE SCALE GENOMIC DNA]</scope>
    <source>
        <strain>DSM 13855 / CECT 5946 / M31</strain>
    </source>
</reference>
<protein>
    <recommendedName>
        <fullName evidence="1">Glycerol-3-phosphate acyltransferase</fullName>
    </recommendedName>
    <alternativeName>
        <fullName evidence="1">Acyl-PO4 G3P acyltransferase</fullName>
    </alternativeName>
    <alternativeName>
        <fullName evidence="1">Acyl-phosphate--glycerol-3-phosphate acyltransferase</fullName>
    </alternativeName>
    <alternativeName>
        <fullName evidence="1">G3P acyltransferase</fullName>
        <shortName evidence="1">GPAT</shortName>
        <ecNumber evidence="1">2.3.1.275</ecNumber>
    </alternativeName>
    <alternativeName>
        <fullName evidence="1">Lysophosphatidic acid synthase</fullName>
        <shortName evidence="1">LPA synthase</shortName>
    </alternativeName>
</protein>
<comment type="function">
    <text evidence="1">Catalyzes the transfer of an acyl group from acyl-phosphate (acyl-PO(4)) to glycerol-3-phosphate (G3P) to form lysophosphatidic acid (LPA). This enzyme utilizes acyl-phosphate as fatty acyl donor, but not acyl-CoA or acyl-ACP.</text>
</comment>
<comment type="catalytic activity">
    <reaction evidence="1">
        <text>an acyl phosphate + sn-glycerol 3-phosphate = a 1-acyl-sn-glycero-3-phosphate + phosphate</text>
        <dbReference type="Rhea" id="RHEA:34075"/>
        <dbReference type="ChEBI" id="CHEBI:43474"/>
        <dbReference type="ChEBI" id="CHEBI:57597"/>
        <dbReference type="ChEBI" id="CHEBI:57970"/>
        <dbReference type="ChEBI" id="CHEBI:59918"/>
        <dbReference type="EC" id="2.3.1.275"/>
    </reaction>
</comment>
<comment type="pathway">
    <text evidence="1">Lipid metabolism; phospholipid metabolism.</text>
</comment>
<comment type="subunit">
    <text evidence="1">Probably interacts with PlsX.</text>
</comment>
<comment type="subcellular location">
    <subcellularLocation>
        <location evidence="1">Cell inner membrane</location>
        <topology evidence="1">Multi-pass membrane protein</topology>
    </subcellularLocation>
</comment>
<comment type="similarity">
    <text evidence="1">Belongs to the PlsY family.</text>
</comment>
<keyword id="KW-0997">Cell inner membrane</keyword>
<keyword id="KW-1003">Cell membrane</keyword>
<keyword id="KW-0444">Lipid biosynthesis</keyword>
<keyword id="KW-0443">Lipid metabolism</keyword>
<keyword id="KW-0472">Membrane</keyword>
<keyword id="KW-0594">Phospholipid biosynthesis</keyword>
<keyword id="KW-1208">Phospholipid metabolism</keyword>
<keyword id="KW-1185">Reference proteome</keyword>
<keyword id="KW-0808">Transferase</keyword>
<keyword id="KW-0812">Transmembrane</keyword>
<keyword id="KW-1133">Transmembrane helix</keyword>
<dbReference type="EC" id="2.3.1.275" evidence="1"/>
<dbReference type="EMBL" id="CP000159">
    <property type="protein sequence ID" value="ABC45392.1"/>
    <property type="molecule type" value="Genomic_DNA"/>
</dbReference>
<dbReference type="RefSeq" id="WP_011404230.1">
    <property type="nucleotide sequence ID" value="NC_007677.1"/>
</dbReference>
<dbReference type="RefSeq" id="YP_445604.1">
    <property type="nucleotide sequence ID" value="NC_007677.1"/>
</dbReference>
<dbReference type="SMR" id="Q2S2H7"/>
<dbReference type="STRING" id="309807.SRU_1480"/>
<dbReference type="EnsemblBacteria" id="ABC45392">
    <property type="protein sequence ID" value="ABC45392"/>
    <property type="gene ID" value="SRU_1480"/>
</dbReference>
<dbReference type="GeneID" id="83728391"/>
<dbReference type="KEGG" id="sru:SRU_1480"/>
<dbReference type="PATRIC" id="fig|309807.25.peg.1537"/>
<dbReference type="eggNOG" id="COG0344">
    <property type="taxonomic scope" value="Bacteria"/>
</dbReference>
<dbReference type="HOGENOM" id="CLU_081254_3_0_10"/>
<dbReference type="OrthoDB" id="9777124at2"/>
<dbReference type="UniPathway" id="UPA00085"/>
<dbReference type="Proteomes" id="UP000008674">
    <property type="component" value="Chromosome"/>
</dbReference>
<dbReference type="GO" id="GO:0005886">
    <property type="term" value="C:plasma membrane"/>
    <property type="evidence" value="ECO:0007669"/>
    <property type="project" value="UniProtKB-SubCell"/>
</dbReference>
<dbReference type="GO" id="GO:0043772">
    <property type="term" value="F:acyl-phosphate glycerol-3-phosphate acyltransferase activity"/>
    <property type="evidence" value="ECO:0007669"/>
    <property type="project" value="UniProtKB-UniRule"/>
</dbReference>
<dbReference type="GO" id="GO:0008654">
    <property type="term" value="P:phospholipid biosynthetic process"/>
    <property type="evidence" value="ECO:0007669"/>
    <property type="project" value="UniProtKB-UniRule"/>
</dbReference>
<dbReference type="HAMAP" id="MF_01043">
    <property type="entry name" value="PlsY"/>
    <property type="match status" value="1"/>
</dbReference>
<dbReference type="InterPro" id="IPR003811">
    <property type="entry name" value="G3P_acylTferase_PlsY"/>
</dbReference>
<dbReference type="NCBIfam" id="TIGR00023">
    <property type="entry name" value="glycerol-3-phosphate 1-O-acyltransferase PlsY"/>
    <property type="match status" value="1"/>
</dbReference>
<dbReference type="PANTHER" id="PTHR30309:SF0">
    <property type="entry name" value="GLYCEROL-3-PHOSPHATE ACYLTRANSFERASE-RELATED"/>
    <property type="match status" value="1"/>
</dbReference>
<dbReference type="PANTHER" id="PTHR30309">
    <property type="entry name" value="INNER MEMBRANE PROTEIN YGIH"/>
    <property type="match status" value="1"/>
</dbReference>
<dbReference type="Pfam" id="PF02660">
    <property type="entry name" value="G3P_acyltransf"/>
    <property type="match status" value="1"/>
</dbReference>
<dbReference type="SMART" id="SM01207">
    <property type="entry name" value="G3P_acyltransf"/>
    <property type="match status" value="1"/>
</dbReference>
<evidence type="ECO:0000255" key="1">
    <source>
        <dbReference type="HAMAP-Rule" id="MF_01043"/>
    </source>
</evidence>
<organism>
    <name type="scientific">Salinibacter ruber (strain DSM 13855 / M31)</name>
    <dbReference type="NCBI Taxonomy" id="309807"/>
    <lineage>
        <taxon>Bacteria</taxon>
        <taxon>Pseudomonadati</taxon>
        <taxon>Rhodothermota</taxon>
        <taxon>Rhodothermia</taxon>
        <taxon>Rhodothermales</taxon>
        <taxon>Salinibacteraceae</taxon>
        <taxon>Salinibacter</taxon>
    </lineage>
</organism>
<gene>
    <name evidence="1" type="primary">plsY</name>
    <name type="ordered locus">SRU_1480</name>
</gene>
<accession>Q2S2H7</accession>
<name>PLSY_SALRD</name>